<name>RS4_ACISJ</name>
<proteinExistence type="inferred from homology"/>
<organism>
    <name type="scientific">Acidovorax sp. (strain JS42)</name>
    <dbReference type="NCBI Taxonomy" id="232721"/>
    <lineage>
        <taxon>Bacteria</taxon>
        <taxon>Pseudomonadati</taxon>
        <taxon>Pseudomonadota</taxon>
        <taxon>Betaproteobacteria</taxon>
        <taxon>Burkholderiales</taxon>
        <taxon>Comamonadaceae</taxon>
        <taxon>Acidovorax</taxon>
    </lineage>
</organism>
<feature type="chain" id="PRO_0000293227" description="Small ribosomal subunit protein uS4">
    <location>
        <begin position="1"/>
        <end position="207"/>
    </location>
</feature>
<feature type="domain" description="S4 RNA-binding" evidence="1">
    <location>
        <begin position="97"/>
        <end position="157"/>
    </location>
</feature>
<feature type="region of interest" description="Disordered" evidence="2">
    <location>
        <begin position="31"/>
        <end position="52"/>
    </location>
</feature>
<comment type="function">
    <text evidence="1">One of the primary rRNA binding proteins, it binds directly to 16S rRNA where it nucleates assembly of the body of the 30S subunit.</text>
</comment>
<comment type="function">
    <text evidence="1">With S5 and S12 plays an important role in translational accuracy.</text>
</comment>
<comment type="subunit">
    <text evidence="1">Part of the 30S ribosomal subunit. Contacts protein S5. The interaction surface between S4 and S5 is involved in control of translational fidelity.</text>
</comment>
<comment type="similarity">
    <text evidence="1">Belongs to the universal ribosomal protein uS4 family.</text>
</comment>
<evidence type="ECO:0000255" key="1">
    <source>
        <dbReference type="HAMAP-Rule" id="MF_01306"/>
    </source>
</evidence>
<evidence type="ECO:0000256" key="2">
    <source>
        <dbReference type="SAM" id="MobiDB-lite"/>
    </source>
</evidence>
<evidence type="ECO:0000305" key="3"/>
<reference key="1">
    <citation type="submission" date="2006-12" db="EMBL/GenBank/DDBJ databases">
        <title>Complete sequence of chromosome 1 of Acidovorax sp. JS42.</title>
        <authorList>
            <person name="Copeland A."/>
            <person name="Lucas S."/>
            <person name="Lapidus A."/>
            <person name="Barry K."/>
            <person name="Detter J.C."/>
            <person name="Glavina del Rio T."/>
            <person name="Dalin E."/>
            <person name="Tice H."/>
            <person name="Pitluck S."/>
            <person name="Chertkov O."/>
            <person name="Brettin T."/>
            <person name="Bruce D."/>
            <person name="Han C."/>
            <person name="Tapia R."/>
            <person name="Gilna P."/>
            <person name="Schmutz J."/>
            <person name="Larimer F."/>
            <person name="Land M."/>
            <person name="Hauser L."/>
            <person name="Kyrpides N."/>
            <person name="Kim E."/>
            <person name="Stahl D."/>
            <person name="Richardson P."/>
        </authorList>
    </citation>
    <scope>NUCLEOTIDE SEQUENCE [LARGE SCALE GENOMIC DNA]</scope>
    <source>
        <strain>JS42</strain>
    </source>
</reference>
<sequence>MARYLGPKAKLSRREGTDLFLKSARRSIADKAKFDSKPGQHGRTSGARTSDYGLQLREKQKVKRMYGVLEKQFRRYFEAAERLKGNTGANLLGLLECRLDNVVYRMGFGSTRAEARQLVSHKAITVNGQSVNIASYLVKAGDVVAVRDKSKKQARIVEALQLAQQVGMPVWVEVNADKVEGTFKKVPDRDEFGADINESLIVELYSR</sequence>
<gene>
    <name evidence="1" type="primary">rpsD</name>
    <name type="ordered locus">Ajs_0405</name>
</gene>
<protein>
    <recommendedName>
        <fullName evidence="1">Small ribosomal subunit protein uS4</fullName>
    </recommendedName>
    <alternativeName>
        <fullName evidence="3">30S ribosomal protein S4</fullName>
    </alternativeName>
</protein>
<keyword id="KW-0687">Ribonucleoprotein</keyword>
<keyword id="KW-0689">Ribosomal protein</keyword>
<keyword id="KW-0694">RNA-binding</keyword>
<keyword id="KW-0699">rRNA-binding</keyword>
<dbReference type="EMBL" id="CP000539">
    <property type="protein sequence ID" value="ABM40657.1"/>
    <property type="molecule type" value="Genomic_DNA"/>
</dbReference>
<dbReference type="SMR" id="A1W332"/>
<dbReference type="STRING" id="232721.Ajs_0405"/>
<dbReference type="KEGG" id="ajs:Ajs_0405"/>
<dbReference type="eggNOG" id="COG0522">
    <property type="taxonomic scope" value="Bacteria"/>
</dbReference>
<dbReference type="HOGENOM" id="CLU_092403_0_2_4"/>
<dbReference type="Proteomes" id="UP000000645">
    <property type="component" value="Chromosome"/>
</dbReference>
<dbReference type="GO" id="GO:0015935">
    <property type="term" value="C:small ribosomal subunit"/>
    <property type="evidence" value="ECO:0007669"/>
    <property type="project" value="InterPro"/>
</dbReference>
<dbReference type="GO" id="GO:0019843">
    <property type="term" value="F:rRNA binding"/>
    <property type="evidence" value="ECO:0007669"/>
    <property type="project" value="UniProtKB-UniRule"/>
</dbReference>
<dbReference type="GO" id="GO:0003735">
    <property type="term" value="F:structural constituent of ribosome"/>
    <property type="evidence" value="ECO:0007669"/>
    <property type="project" value="InterPro"/>
</dbReference>
<dbReference type="GO" id="GO:0042274">
    <property type="term" value="P:ribosomal small subunit biogenesis"/>
    <property type="evidence" value="ECO:0007669"/>
    <property type="project" value="TreeGrafter"/>
</dbReference>
<dbReference type="GO" id="GO:0006412">
    <property type="term" value="P:translation"/>
    <property type="evidence" value="ECO:0007669"/>
    <property type="project" value="UniProtKB-UniRule"/>
</dbReference>
<dbReference type="CDD" id="cd00165">
    <property type="entry name" value="S4"/>
    <property type="match status" value="1"/>
</dbReference>
<dbReference type="FunFam" id="1.10.1050.10:FF:000001">
    <property type="entry name" value="30S ribosomal protein S4"/>
    <property type="match status" value="1"/>
</dbReference>
<dbReference type="FunFam" id="3.10.290.10:FF:000001">
    <property type="entry name" value="30S ribosomal protein S4"/>
    <property type="match status" value="1"/>
</dbReference>
<dbReference type="Gene3D" id="1.10.1050.10">
    <property type="entry name" value="Ribosomal Protein S4 Delta 41, Chain A, domain 1"/>
    <property type="match status" value="1"/>
</dbReference>
<dbReference type="Gene3D" id="3.10.290.10">
    <property type="entry name" value="RNA-binding S4 domain"/>
    <property type="match status" value="1"/>
</dbReference>
<dbReference type="HAMAP" id="MF_01306_B">
    <property type="entry name" value="Ribosomal_uS4_B"/>
    <property type="match status" value="1"/>
</dbReference>
<dbReference type="InterPro" id="IPR022801">
    <property type="entry name" value="Ribosomal_uS4"/>
</dbReference>
<dbReference type="InterPro" id="IPR005709">
    <property type="entry name" value="Ribosomal_uS4_bac-type"/>
</dbReference>
<dbReference type="InterPro" id="IPR018079">
    <property type="entry name" value="Ribosomal_uS4_CS"/>
</dbReference>
<dbReference type="InterPro" id="IPR001912">
    <property type="entry name" value="Ribosomal_uS4_N"/>
</dbReference>
<dbReference type="InterPro" id="IPR002942">
    <property type="entry name" value="S4_RNA-bd"/>
</dbReference>
<dbReference type="InterPro" id="IPR036986">
    <property type="entry name" value="S4_RNA-bd_sf"/>
</dbReference>
<dbReference type="NCBIfam" id="NF003717">
    <property type="entry name" value="PRK05327.1"/>
    <property type="match status" value="1"/>
</dbReference>
<dbReference type="NCBIfam" id="TIGR01017">
    <property type="entry name" value="rpsD_bact"/>
    <property type="match status" value="1"/>
</dbReference>
<dbReference type="PANTHER" id="PTHR11831">
    <property type="entry name" value="30S 40S RIBOSOMAL PROTEIN"/>
    <property type="match status" value="1"/>
</dbReference>
<dbReference type="PANTHER" id="PTHR11831:SF4">
    <property type="entry name" value="SMALL RIBOSOMAL SUBUNIT PROTEIN US4M"/>
    <property type="match status" value="1"/>
</dbReference>
<dbReference type="Pfam" id="PF00163">
    <property type="entry name" value="Ribosomal_S4"/>
    <property type="match status" value="1"/>
</dbReference>
<dbReference type="Pfam" id="PF01479">
    <property type="entry name" value="S4"/>
    <property type="match status" value="1"/>
</dbReference>
<dbReference type="SMART" id="SM01390">
    <property type="entry name" value="Ribosomal_S4"/>
    <property type="match status" value="1"/>
</dbReference>
<dbReference type="SMART" id="SM00363">
    <property type="entry name" value="S4"/>
    <property type="match status" value="1"/>
</dbReference>
<dbReference type="SUPFAM" id="SSF55174">
    <property type="entry name" value="Alpha-L RNA-binding motif"/>
    <property type="match status" value="1"/>
</dbReference>
<dbReference type="PROSITE" id="PS00632">
    <property type="entry name" value="RIBOSOMAL_S4"/>
    <property type="match status" value="1"/>
</dbReference>
<dbReference type="PROSITE" id="PS50889">
    <property type="entry name" value="S4"/>
    <property type="match status" value="1"/>
</dbReference>
<accession>A1W332</accession>